<organism>
    <name type="scientific">Pseudomonas aeruginosa (strain LESB58)</name>
    <dbReference type="NCBI Taxonomy" id="557722"/>
    <lineage>
        <taxon>Bacteria</taxon>
        <taxon>Pseudomonadati</taxon>
        <taxon>Pseudomonadota</taxon>
        <taxon>Gammaproteobacteria</taxon>
        <taxon>Pseudomonadales</taxon>
        <taxon>Pseudomonadaceae</taxon>
        <taxon>Pseudomonas</taxon>
    </lineage>
</organism>
<gene>
    <name evidence="1" type="primary">upp</name>
    <name type="ordered locus">PLES_50321</name>
</gene>
<feature type="chain" id="PRO_1000139148" description="Uracil phosphoribosyltransferase">
    <location>
        <begin position="1"/>
        <end position="212"/>
    </location>
</feature>
<feature type="binding site" evidence="1">
    <location>
        <position position="78"/>
    </location>
    <ligand>
        <name>5-phospho-alpha-D-ribose 1-diphosphate</name>
        <dbReference type="ChEBI" id="CHEBI:58017"/>
    </ligand>
</feature>
<feature type="binding site" evidence="1">
    <location>
        <position position="103"/>
    </location>
    <ligand>
        <name>5-phospho-alpha-D-ribose 1-diphosphate</name>
        <dbReference type="ChEBI" id="CHEBI:58017"/>
    </ligand>
</feature>
<feature type="binding site" evidence="1">
    <location>
        <begin position="130"/>
        <end position="138"/>
    </location>
    <ligand>
        <name>5-phospho-alpha-D-ribose 1-diphosphate</name>
        <dbReference type="ChEBI" id="CHEBI:58017"/>
    </ligand>
</feature>
<feature type="binding site" evidence="1">
    <location>
        <position position="193"/>
    </location>
    <ligand>
        <name>uracil</name>
        <dbReference type="ChEBI" id="CHEBI:17568"/>
    </ligand>
</feature>
<feature type="binding site" evidence="1">
    <location>
        <begin position="198"/>
        <end position="200"/>
    </location>
    <ligand>
        <name>uracil</name>
        <dbReference type="ChEBI" id="CHEBI:17568"/>
    </ligand>
</feature>
<feature type="binding site" evidence="1">
    <location>
        <position position="199"/>
    </location>
    <ligand>
        <name>5-phospho-alpha-D-ribose 1-diphosphate</name>
        <dbReference type="ChEBI" id="CHEBI:58017"/>
    </ligand>
</feature>
<comment type="function">
    <text evidence="1">Catalyzes the conversion of uracil and 5-phospho-alpha-D-ribose 1-diphosphate (PRPP) to UMP and diphosphate.</text>
</comment>
<comment type="catalytic activity">
    <reaction evidence="1">
        <text>UMP + diphosphate = 5-phospho-alpha-D-ribose 1-diphosphate + uracil</text>
        <dbReference type="Rhea" id="RHEA:13017"/>
        <dbReference type="ChEBI" id="CHEBI:17568"/>
        <dbReference type="ChEBI" id="CHEBI:33019"/>
        <dbReference type="ChEBI" id="CHEBI:57865"/>
        <dbReference type="ChEBI" id="CHEBI:58017"/>
        <dbReference type="EC" id="2.4.2.9"/>
    </reaction>
</comment>
<comment type="cofactor">
    <cofactor evidence="1">
        <name>Mg(2+)</name>
        <dbReference type="ChEBI" id="CHEBI:18420"/>
    </cofactor>
    <text evidence="1">Binds 1 Mg(2+) ion per subunit. The magnesium is bound as Mg-PRPP.</text>
</comment>
<comment type="activity regulation">
    <text evidence="1">Allosterically activated by GTP.</text>
</comment>
<comment type="pathway">
    <text evidence="1">Pyrimidine metabolism; UMP biosynthesis via salvage pathway; UMP from uracil: step 1/1.</text>
</comment>
<comment type="similarity">
    <text evidence="1">Belongs to the UPRTase family.</text>
</comment>
<evidence type="ECO:0000255" key="1">
    <source>
        <dbReference type="HAMAP-Rule" id="MF_01218"/>
    </source>
</evidence>
<name>UPP_PSEA8</name>
<proteinExistence type="inferred from homology"/>
<dbReference type="EC" id="2.4.2.9" evidence="1"/>
<dbReference type="EMBL" id="FM209186">
    <property type="protein sequence ID" value="CAW29786.1"/>
    <property type="molecule type" value="Genomic_DNA"/>
</dbReference>
<dbReference type="RefSeq" id="WP_003094968.1">
    <property type="nucleotide sequence ID" value="NC_011770.1"/>
</dbReference>
<dbReference type="SMR" id="B7V0J2"/>
<dbReference type="KEGG" id="pag:PLES_50321"/>
<dbReference type="HOGENOM" id="CLU_067096_2_2_6"/>
<dbReference type="UniPathway" id="UPA00574">
    <property type="reaction ID" value="UER00636"/>
</dbReference>
<dbReference type="GO" id="GO:0005525">
    <property type="term" value="F:GTP binding"/>
    <property type="evidence" value="ECO:0007669"/>
    <property type="project" value="UniProtKB-KW"/>
</dbReference>
<dbReference type="GO" id="GO:0000287">
    <property type="term" value="F:magnesium ion binding"/>
    <property type="evidence" value="ECO:0007669"/>
    <property type="project" value="UniProtKB-UniRule"/>
</dbReference>
<dbReference type="GO" id="GO:0004845">
    <property type="term" value="F:uracil phosphoribosyltransferase activity"/>
    <property type="evidence" value="ECO:0007669"/>
    <property type="project" value="UniProtKB-UniRule"/>
</dbReference>
<dbReference type="GO" id="GO:0044206">
    <property type="term" value="P:UMP salvage"/>
    <property type="evidence" value="ECO:0007669"/>
    <property type="project" value="UniProtKB-UniRule"/>
</dbReference>
<dbReference type="GO" id="GO:0006223">
    <property type="term" value="P:uracil salvage"/>
    <property type="evidence" value="ECO:0007669"/>
    <property type="project" value="InterPro"/>
</dbReference>
<dbReference type="CDD" id="cd06223">
    <property type="entry name" value="PRTases_typeI"/>
    <property type="match status" value="1"/>
</dbReference>
<dbReference type="FunFam" id="3.40.50.2020:FF:000003">
    <property type="entry name" value="Uracil phosphoribosyltransferase"/>
    <property type="match status" value="1"/>
</dbReference>
<dbReference type="Gene3D" id="3.40.50.2020">
    <property type="match status" value="1"/>
</dbReference>
<dbReference type="HAMAP" id="MF_01218_B">
    <property type="entry name" value="Upp_B"/>
    <property type="match status" value="1"/>
</dbReference>
<dbReference type="InterPro" id="IPR000836">
    <property type="entry name" value="PRibTrfase_dom"/>
</dbReference>
<dbReference type="InterPro" id="IPR029057">
    <property type="entry name" value="PRTase-like"/>
</dbReference>
<dbReference type="InterPro" id="IPR034332">
    <property type="entry name" value="Upp_B"/>
</dbReference>
<dbReference type="InterPro" id="IPR050054">
    <property type="entry name" value="UPRTase/APRTase"/>
</dbReference>
<dbReference type="InterPro" id="IPR005765">
    <property type="entry name" value="Ura_phspho_trans"/>
</dbReference>
<dbReference type="NCBIfam" id="NF001097">
    <property type="entry name" value="PRK00129.1"/>
    <property type="match status" value="1"/>
</dbReference>
<dbReference type="NCBIfam" id="TIGR01091">
    <property type="entry name" value="upp"/>
    <property type="match status" value="1"/>
</dbReference>
<dbReference type="PANTHER" id="PTHR32315">
    <property type="entry name" value="ADENINE PHOSPHORIBOSYLTRANSFERASE"/>
    <property type="match status" value="1"/>
</dbReference>
<dbReference type="PANTHER" id="PTHR32315:SF4">
    <property type="entry name" value="URACIL PHOSPHORIBOSYLTRANSFERASE, CHLOROPLASTIC"/>
    <property type="match status" value="1"/>
</dbReference>
<dbReference type="Pfam" id="PF14681">
    <property type="entry name" value="UPRTase"/>
    <property type="match status" value="1"/>
</dbReference>
<dbReference type="SUPFAM" id="SSF53271">
    <property type="entry name" value="PRTase-like"/>
    <property type="match status" value="1"/>
</dbReference>
<keyword id="KW-0021">Allosteric enzyme</keyword>
<keyword id="KW-0328">Glycosyltransferase</keyword>
<keyword id="KW-0342">GTP-binding</keyword>
<keyword id="KW-0460">Magnesium</keyword>
<keyword id="KW-0547">Nucleotide-binding</keyword>
<keyword id="KW-0808">Transferase</keyword>
<protein>
    <recommendedName>
        <fullName evidence="1">Uracil phosphoribosyltransferase</fullName>
        <ecNumber evidence="1">2.4.2.9</ecNumber>
    </recommendedName>
    <alternativeName>
        <fullName evidence="1">UMP pyrophosphorylase</fullName>
    </alternativeName>
    <alternativeName>
        <fullName evidence="1">UPRTase</fullName>
    </alternativeName>
</protein>
<reference key="1">
    <citation type="journal article" date="2009" name="Genome Res.">
        <title>Newly introduced genomic prophage islands are critical determinants of in vivo competitiveness in the Liverpool epidemic strain of Pseudomonas aeruginosa.</title>
        <authorList>
            <person name="Winstanley C."/>
            <person name="Langille M.G.I."/>
            <person name="Fothergill J.L."/>
            <person name="Kukavica-Ibrulj I."/>
            <person name="Paradis-Bleau C."/>
            <person name="Sanschagrin F."/>
            <person name="Thomson N.R."/>
            <person name="Winsor G.L."/>
            <person name="Quail M.A."/>
            <person name="Lennard N."/>
            <person name="Bignell A."/>
            <person name="Clarke L."/>
            <person name="Seeger K."/>
            <person name="Saunders D."/>
            <person name="Harris D."/>
            <person name="Parkhill J."/>
            <person name="Hancock R.E.W."/>
            <person name="Brinkman F.S.L."/>
            <person name="Levesque R.C."/>
        </authorList>
    </citation>
    <scope>NUCLEOTIDE SEQUENCE [LARGE SCALE GENOMIC DNA]</scope>
    <source>
        <strain>LESB58</strain>
    </source>
</reference>
<accession>B7V0J2</accession>
<sequence length="212" mass="22938">MPVHEIRHPLIRHKLGLMRRADISTKNFRELAQEVGALLTYEATKDLPLEQYEIPGWAGPVTVEKISGKKITVVPILRAGIGMLDGVLSLIPGAKVSAVGVARNEETLEARTYLEKLAPDIAERRSLIIDPMLATGGSMVATIDLLKKAGSKEIRAMVLVAAPEGIEAVRKAHPDVIIYTASIDEKLDENGYIIPGLGDAGDKIFGTKQKEA</sequence>